<reference key="1">
    <citation type="journal article" date="2010" name="Phytochemistry">
        <title>Flavone synthase II (CYP93B16) from soybean (Glycine max L.).</title>
        <authorList>
            <person name="Fliegmann J."/>
            <person name="Furtwangler K."/>
            <person name="Malterer G."/>
            <person name="Cantarello C."/>
            <person name="Schuler G."/>
            <person name="Ebel J."/>
            <person name="Mithofer A."/>
        </authorList>
    </citation>
    <scope>NUCLEOTIDE SEQUENCE [MRNA]</scope>
    <scope>FUNCTION</scope>
    <scope>CATALYTIC ACTIVITY</scope>
    <scope>BIOPHYSICOCHEMICAL PROPERTIES</scope>
</reference>
<reference key="2">
    <citation type="submission" date="2010-01" db="EMBL/GenBank/DDBJ databases">
        <title>Isolation and characterization of two flavone synthase genes from soybean (Glycine max) and their function in flavone and isoflavone accumulation.</title>
        <authorList>
            <person name="Jiang Y.N."/>
            <person name="Li H."/>
            <person name="Yao L.M."/>
            <person name="Wu T.L."/>
            <person name="Wang B."/>
        </authorList>
    </citation>
    <scope>NUCLEOTIDE SEQUENCE [GENOMIC DNA / MRNA]</scope>
</reference>
<reference key="3">
    <citation type="journal article" date="2010" name="Nature">
        <title>Genome sequence of the palaeopolyploid soybean.</title>
        <authorList>
            <person name="Schmutz J."/>
            <person name="Cannon S.B."/>
            <person name="Schlueter J."/>
            <person name="Ma J."/>
            <person name="Mitros T."/>
            <person name="Nelson W."/>
            <person name="Hyten D.L."/>
            <person name="Song Q."/>
            <person name="Thelen J.J."/>
            <person name="Cheng J."/>
            <person name="Xu D."/>
            <person name="Hellsten U."/>
            <person name="May G.D."/>
            <person name="Yu Y."/>
            <person name="Sakurai T."/>
            <person name="Umezawa T."/>
            <person name="Bhattacharyya M.K."/>
            <person name="Sandhu D."/>
            <person name="Valliyodan B."/>
            <person name="Lindquist E."/>
            <person name="Peto M."/>
            <person name="Grant D."/>
            <person name="Shu S."/>
            <person name="Goodstein D."/>
            <person name="Barry K."/>
            <person name="Futrell-Griggs M."/>
            <person name="Abernathy B."/>
            <person name="Du J."/>
            <person name="Tian Z."/>
            <person name="Zhu L."/>
            <person name="Gill N."/>
            <person name="Joshi T."/>
            <person name="Libault M."/>
            <person name="Sethuraman A."/>
            <person name="Zhang X.-C."/>
            <person name="Shinozaki K."/>
            <person name="Nguyen H.T."/>
            <person name="Wing R.A."/>
            <person name="Cregan P."/>
            <person name="Specht J."/>
            <person name="Grimwood J."/>
            <person name="Rokhsar D."/>
            <person name="Stacey G."/>
            <person name="Shoemaker R.C."/>
            <person name="Jackson S.A."/>
        </authorList>
    </citation>
    <scope>NUCLEOTIDE SEQUENCE [LARGE SCALE GENOMIC DNA]</scope>
    <source>
        <strain>cv. Williams 82</strain>
    </source>
</reference>
<evidence type="ECO:0000250" key="1">
    <source>
        <dbReference type="UniProtKB" id="Q94IP1"/>
    </source>
</evidence>
<evidence type="ECO:0000255" key="2"/>
<evidence type="ECO:0000269" key="3">
    <source>
    </source>
</evidence>
<evidence type="ECO:0000303" key="4">
    <source>
    </source>
</evidence>
<evidence type="ECO:0000305" key="5"/>
<evidence type="ECO:0000312" key="6">
    <source>
        <dbReference type="EMBL" id="ADV35712.1"/>
    </source>
</evidence>
<evidence type="ECO:0000312" key="7">
    <source>
        <dbReference type="EMBL" id="KRH24861.1"/>
    </source>
</evidence>
<name>C9B16_SOYBN</name>
<comment type="function">
    <text evidence="3">Functions as a flavone synthase II (FNSII) that catalyzes the direct conversion of flavanones to flavones (PubMed:20132953). In vitro, can convert liquiritigenin, naringenin and eriodictyol to 7,4'-dihydroxyflavone, apigenin and luteolin, respectively (PubMed:20132953).</text>
</comment>
<comment type="catalytic activity">
    <reaction evidence="3">
        <text>a flavanone + reduced [NADPH--hemoprotein reductase] + O2 = a flavone + oxidized [NADPH--hemoprotein reductase] + 2 H2O + H(+)</text>
        <dbReference type="Rhea" id="RHEA:57680"/>
        <dbReference type="Rhea" id="RHEA-COMP:11964"/>
        <dbReference type="Rhea" id="RHEA-COMP:11965"/>
        <dbReference type="ChEBI" id="CHEBI:15377"/>
        <dbReference type="ChEBI" id="CHEBI:15378"/>
        <dbReference type="ChEBI" id="CHEBI:15379"/>
        <dbReference type="ChEBI" id="CHEBI:24043"/>
        <dbReference type="ChEBI" id="CHEBI:28863"/>
        <dbReference type="ChEBI" id="CHEBI:57618"/>
        <dbReference type="ChEBI" id="CHEBI:58210"/>
        <dbReference type="EC" id="1.14.19.76"/>
    </reaction>
    <physiologicalReaction direction="left-to-right" evidence="3">
        <dbReference type="Rhea" id="RHEA:57681"/>
    </physiologicalReaction>
</comment>
<comment type="cofactor">
    <cofactor evidence="1">
        <name>heme</name>
        <dbReference type="ChEBI" id="CHEBI:30413"/>
    </cofactor>
</comment>
<comment type="biophysicochemical properties">
    <kinetics>
        <KM evidence="3">4.2 uM for liquiritigenin</KM>
        <KM evidence="3">2.5 uM for naringenin</KM>
        <KM evidence="3">1.8 uM for eriodictyol</KM>
    </kinetics>
    <phDependence>
        <text evidence="3">Optimum pH is 7.9.</text>
    </phDependence>
    <temperatureDependence>
        <text evidence="3">Optimum temperature is 25 degrees Celsius.</text>
    </temperatureDependence>
</comment>
<comment type="pathway">
    <text evidence="5">Secondary metabolite biosynthesis; flavonoid biosynthesis.</text>
</comment>
<comment type="subcellular location">
    <subcellularLocation>
        <location evidence="2">Membrane</location>
        <topology evidence="2">Single-pass membrane protein</topology>
    </subcellularLocation>
</comment>
<comment type="similarity">
    <text evidence="5">Belongs to the cytochrome P450 family.</text>
</comment>
<organism>
    <name type="scientific">Glycine max</name>
    <name type="common">Soybean</name>
    <name type="synonym">Glycine hispida</name>
    <dbReference type="NCBI Taxonomy" id="3847"/>
    <lineage>
        <taxon>Eukaryota</taxon>
        <taxon>Viridiplantae</taxon>
        <taxon>Streptophyta</taxon>
        <taxon>Embryophyta</taxon>
        <taxon>Tracheophyta</taxon>
        <taxon>Spermatophyta</taxon>
        <taxon>Magnoliopsida</taxon>
        <taxon>eudicotyledons</taxon>
        <taxon>Gunneridae</taxon>
        <taxon>Pentapetalae</taxon>
        <taxon>rosids</taxon>
        <taxon>fabids</taxon>
        <taxon>Fabales</taxon>
        <taxon>Fabaceae</taxon>
        <taxon>Papilionoideae</taxon>
        <taxon>50 kb inversion clade</taxon>
        <taxon>NPAAA clade</taxon>
        <taxon>indigoferoid/millettioid clade</taxon>
        <taxon>Phaseoleae</taxon>
        <taxon>Glycine</taxon>
        <taxon>Glycine subgen. Soja</taxon>
    </lineage>
</organism>
<gene>
    <name evidence="4" type="primary">CYP93B16</name>
    <name evidence="6" type="synonym">FNSII-1</name>
    <name evidence="7" type="ORF">GLYMA_12G067000</name>
</gene>
<sequence>MISESLLLVFLIVFISASLLKLLFVRENKPKAHLKNPPSPPAIPIIGHLHLLKPLIHHSFRDLSLRYGPLLSLRIGSVKFIVASTPSLAQEFLKTNELTYSSRKMNMAINMVTYHNATFAFAPYDTYWKFMKKLSTTELLGNKTLGHFLPIRTREVHDIIQFLFHKSKAQESVNLTEALLSLSNNVISQMMLSIKSSGTDSQAEQARTLVREVTQIFGEFNVSDFLGFCKNLDLQGFRKRALDIHKRYDALLEKIISDREELRRKSKVDGCEDGDDEKVKDFLDILLDVAEQKECEVQLTRNHVKSLILDYFTAATDTTAISVEWTIAELFNNPKVLKKAQEEVDRVTGNTQLVCEADIPNLPYIHAIIKETMRLHPPIPMIMRKGIEDCVVNGNMIPKGSIVCVNIWAMGRDPNIWKNPLEFKPERFLEGEGSAIDTKGHHFELLPFGSGRRGCPGMPLAMRELPTIIGALIQCFEWKMLGSQGEILDHGRSLISMDERPGLTAPRANDLIGIPVARLNPTPFRQM</sequence>
<protein>
    <recommendedName>
        <fullName evidence="5">Cytochrome P450 93B16</fullName>
        <ecNumber evidence="3">1.14.19.76</ecNumber>
    </recommendedName>
    <alternativeName>
        <fullName evidence="4">Flavone synthase II</fullName>
        <shortName evidence="4">GmFNSII</shortName>
    </alternativeName>
</protein>
<keyword id="KW-0284">Flavonoid biosynthesis</keyword>
<keyword id="KW-0349">Heme</keyword>
<keyword id="KW-0408">Iron</keyword>
<keyword id="KW-0472">Membrane</keyword>
<keyword id="KW-0479">Metal-binding</keyword>
<keyword id="KW-0503">Monooxygenase</keyword>
<keyword id="KW-0560">Oxidoreductase</keyword>
<keyword id="KW-1185">Reference proteome</keyword>
<keyword id="KW-0812">Transmembrane</keyword>
<keyword id="KW-1133">Transmembrane helix</keyword>
<proteinExistence type="evidence at protein level"/>
<feature type="chain" id="PRO_0000451629" description="Cytochrome P450 93B16">
    <location>
        <begin position="1"/>
        <end position="527"/>
    </location>
</feature>
<feature type="transmembrane region" description="Helical" evidence="2">
    <location>
        <begin position="5"/>
        <end position="25"/>
    </location>
</feature>
<feature type="binding site" description="axial binding residue" evidence="1">
    <location>
        <position position="455"/>
    </location>
    <ligand>
        <name>heme</name>
        <dbReference type="ChEBI" id="CHEBI:30413"/>
    </ligand>
    <ligandPart>
        <name>Fe</name>
        <dbReference type="ChEBI" id="CHEBI:18248"/>
    </ligandPart>
</feature>
<feature type="sequence conflict" description="In Ref. 1; ACV65037." evidence="5" ref="1">
    <original>L</original>
    <variation>V</variation>
    <location>
        <position position="8"/>
    </location>
</feature>
<accession>E9KBR8</accession>
<accession>D3U591</accession>
<dbReference type="EC" id="1.14.19.76" evidence="3"/>
<dbReference type="EMBL" id="FJ767774">
    <property type="protein sequence ID" value="ACV65037.1"/>
    <property type="molecule type" value="mRNA"/>
</dbReference>
<dbReference type="EMBL" id="GU568027">
    <property type="protein sequence ID" value="ADV35712.1"/>
    <property type="molecule type" value="mRNA"/>
</dbReference>
<dbReference type="EMBL" id="GU575289">
    <property type="protein sequence ID" value="ADV52251.1"/>
    <property type="molecule type" value="Genomic_DNA"/>
</dbReference>
<dbReference type="EMBL" id="CM000845">
    <property type="protein sequence ID" value="KRH24861.1"/>
    <property type="molecule type" value="Genomic_DNA"/>
</dbReference>
<dbReference type="RefSeq" id="NP_001241007.1">
    <property type="nucleotide sequence ID" value="NM_001254078.1"/>
</dbReference>
<dbReference type="SMR" id="E9KBR8"/>
<dbReference type="STRING" id="3847.E9KBR8"/>
<dbReference type="PaxDb" id="3847-GLYMA12G07190.1"/>
<dbReference type="EnsemblPlants" id="KRH24861">
    <property type="protein sequence ID" value="KRH24861"/>
    <property type="gene ID" value="GLYMA_12G067000"/>
</dbReference>
<dbReference type="GeneID" id="100783503"/>
<dbReference type="Gramene" id="KRH24861">
    <property type="protein sequence ID" value="KRH24861"/>
    <property type="gene ID" value="GLYMA_12G067000"/>
</dbReference>
<dbReference type="KEGG" id="gmx:100783503"/>
<dbReference type="eggNOG" id="KOG0156">
    <property type="taxonomic scope" value="Eukaryota"/>
</dbReference>
<dbReference type="HOGENOM" id="CLU_001570_4_0_1"/>
<dbReference type="InParanoid" id="E9KBR8"/>
<dbReference type="OMA" id="WWINFRA"/>
<dbReference type="OrthoDB" id="1103324at2759"/>
<dbReference type="BRENDA" id="1.14.19.76">
    <property type="organism ID" value="2483"/>
</dbReference>
<dbReference type="UniPathway" id="UPA00154"/>
<dbReference type="Proteomes" id="UP000008827">
    <property type="component" value="Chromosome 12"/>
</dbReference>
<dbReference type="ExpressionAtlas" id="E9KBR8">
    <property type="expression patterns" value="baseline and differential"/>
</dbReference>
<dbReference type="GO" id="GO:0016020">
    <property type="term" value="C:membrane"/>
    <property type="evidence" value="ECO:0000318"/>
    <property type="project" value="GO_Central"/>
</dbReference>
<dbReference type="GO" id="GO:0020037">
    <property type="term" value="F:heme binding"/>
    <property type="evidence" value="ECO:0007669"/>
    <property type="project" value="InterPro"/>
</dbReference>
<dbReference type="GO" id="GO:0005506">
    <property type="term" value="F:iron ion binding"/>
    <property type="evidence" value="ECO:0007669"/>
    <property type="project" value="InterPro"/>
</dbReference>
<dbReference type="GO" id="GO:0016709">
    <property type="term" value="F:oxidoreductase activity, acting on paired donors, with incorporation or reduction of molecular oxygen, NAD(P)H as one donor, and incorporation of one atom of oxygen"/>
    <property type="evidence" value="ECO:0000318"/>
    <property type="project" value="GO_Central"/>
</dbReference>
<dbReference type="GO" id="GO:0016717">
    <property type="term" value="F:oxidoreductase activity, acting on paired donors, with oxidation of a pair of donors resulting in the reduction of molecular oxygen to two molecules of water"/>
    <property type="evidence" value="ECO:0000314"/>
    <property type="project" value="UniProtKB"/>
</dbReference>
<dbReference type="GO" id="GO:0051553">
    <property type="term" value="P:flavone biosynthetic process"/>
    <property type="evidence" value="ECO:0000314"/>
    <property type="project" value="UniProtKB"/>
</dbReference>
<dbReference type="GO" id="GO:0033511">
    <property type="term" value="P:luteolin biosynthetic process"/>
    <property type="evidence" value="ECO:0000314"/>
    <property type="project" value="UniProtKB"/>
</dbReference>
<dbReference type="CDD" id="cd20655">
    <property type="entry name" value="CYP93"/>
    <property type="match status" value="1"/>
</dbReference>
<dbReference type="FunFam" id="1.10.630.10:FF:000019">
    <property type="entry name" value="Cytochrome P450 family protein"/>
    <property type="match status" value="1"/>
</dbReference>
<dbReference type="Gene3D" id="1.10.630.10">
    <property type="entry name" value="Cytochrome P450"/>
    <property type="match status" value="1"/>
</dbReference>
<dbReference type="InterPro" id="IPR001128">
    <property type="entry name" value="Cyt_P450"/>
</dbReference>
<dbReference type="InterPro" id="IPR017972">
    <property type="entry name" value="Cyt_P450_CS"/>
</dbReference>
<dbReference type="InterPro" id="IPR002401">
    <property type="entry name" value="Cyt_P450_E_grp-I"/>
</dbReference>
<dbReference type="InterPro" id="IPR036396">
    <property type="entry name" value="Cyt_P450_sf"/>
</dbReference>
<dbReference type="PANTHER" id="PTHR47943:SF8">
    <property type="entry name" value="CYTOCHROME P450"/>
    <property type="match status" value="1"/>
</dbReference>
<dbReference type="PANTHER" id="PTHR47943">
    <property type="entry name" value="CYTOCHROME P450 93A3-LIKE"/>
    <property type="match status" value="1"/>
</dbReference>
<dbReference type="Pfam" id="PF00067">
    <property type="entry name" value="p450"/>
    <property type="match status" value="1"/>
</dbReference>
<dbReference type="PRINTS" id="PR00463">
    <property type="entry name" value="EP450I"/>
</dbReference>
<dbReference type="PRINTS" id="PR00385">
    <property type="entry name" value="P450"/>
</dbReference>
<dbReference type="SUPFAM" id="SSF48264">
    <property type="entry name" value="Cytochrome P450"/>
    <property type="match status" value="1"/>
</dbReference>
<dbReference type="PROSITE" id="PS00086">
    <property type="entry name" value="CYTOCHROME_P450"/>
    <property type="match status" value="1"/>
</dbReference>